<dbReference type="EC" id="5.2.1.8" evidence="1"/>
<dbReference type="EMBL" id="AP009179">
    <property type="protein sequence ID" value="BAF70972.1"/>
    <property type="molecule type" value="Genomic_DNA"/>
</dbReference>
<dbReference type="RefSeq" id="WP_011979705.1">
    <property type="nucleotide sequence ID" value="NC_009663.1"/>
</dbReference>
<dbReference type="SMR" id="A6Q674"/>
<dbReference type="STRING" id="387093.SUN_0011"/>
<dbReference type="KEGG" id="sun:SUN_0011"/>
<dbReference type="eggNOG" id="COG0544">
    <property type="taxonomic scope" value="Bacteria"/>
</dbReference>
<dbReference type="HOGENOM" id="CLU_033058_2_2_7"/>
<dbReference type="OrthoDB" id="9767721at2"/>
<dbReference type="Proteomes" id="UP000006378">
    <property type="component" value="Chromosome"/>
</dbReference>
<dbReference type="GO" id="GO:0005737">
    <property type="term" value="C:cytoplasm"/>
    <property type="evidence" value="ECO:0007669"/>
    <property type="project" value="UniProtKB-SubCell"/>
</dbReference>
<dbReference type="GO" id="GO:0003755">
    <property type="term" value="F:peptidyl-prolyl cis-trans isomerase activity"/>
    <property type="evidence" value="ECO:0007669"/>
    <property type="project" value="UniProtKB-UniRule"/>
</dbReference>
<dbReference type="GO" id="GO:0051301">
    <property type="term" value="P:cell division"/>
    <property type="evidence" value="ECO:0007669"/>
    <property type="project" value="UniProtKB-KW"/>
</dbReference>
<dbReference type="GO" id="GO:0006457">
    <property type="term" value="P:protein folding"/>
    <property type="evidence" value="ECO:0007669"/>
    <property type="project" value="UniProtKB-UniRule"/>
</dbReference>
<dbReference type="GO" id="GO:0015031">
    <property type="term" value="P:protein transport"/>
    <property type="evidence" value="ECO:0007669"/>
    <property type="project" value="UniProtKB-UniRule"/>
</dbReference>
<dbReference type="FunFam" id="3.10.50.40:FF:000001">
    <property type="entry name" value="Trigger factor"/>
    <property type="match status" value="1"/>
</dbReference>
<dbReference type="Gene3D" id="3.10.50.40">
    <property type="match status" value="1"/>
</dbReference>
<dbReference type="Gene3D" id="3.30.70.1050">
    <property type="entry name" value="Trigger factor ribosome-binding domain"/>
    <property type="match status" value="1"/>
</dbReference>
<dbReference type="Gene3D" id="1.10.3120.10">
    <property type="entry name" value="Trigger factor, C-terminal domain"/>
    <property type="match status" value="1"/>
</dbReference>
<dbReference type="HAMAP" id="MF_00303">
    <property type="entry name" value="Trigger_factor_Tig"/>
    <property type="match status" value="1"/>
</dbReference>
<dbReference type="InterPro" id="IPR046357">
    <property type="entry name" value="PPIase_dom_sf"/>
</dbReference>
<dbReference type="InterPro" id="IPR001179">
    <property type="entry name" value="PPIase_FKBP_dom"/>
</dbReference>
<dbReference type="InterPro" id="IPR005215">
    <property type="entry name" value="Trig_fac"/>
</dbReference>
<dbReference type="InterPro" id="IPR008880">
    <property type="entry name" value="Trigger_fac_C"/>
</dbReference>
<dbReference type="InterPro" id="IPR037041">
    <property type="entry name" value="Trigger_fac_C_sf"/>
</dbReference>
<dbReference type="InterPro" id="IPR008881">
    <property type="entry name" value="Trigger_fac_ribosome-bd_bac"/>
</dbReference>
<dbReference type="InterPro" id="IPR036611">
    <property type="entry name" value="Trigger_fac_ribosome-bd_sf"/>
</dbReference>
<dbReference type="InterPro" id="IPR027304">
    <property type="entry name" value="Trigger_fact/SurA_dom_sf"/>
</dbReference>
<dbReference type="NCBIfam" id="TIGR00115">
    <property type="entry name" value="tig"/>
    <property type="match status" value="1"/>
</dbReference>
<dbReference type="Pfam" id="PF00254">
    <property type="entry name" value="FKBP_C"/>
    <property type="match status" value="1"/>
</dbReference>
<dbReference type="Pfam" id="PF05698">
    <property type="entry name" value="Trigger_C"/>
    <property type="match status" value="1"/>
</dbReference>
<dbReference type="Pfam" id="PF05697">
    <property type="entry name" value="Trigger_N"/>
    <property type="match status" value="1"/>
</dbReference>
<dbReference type="PIRSF" id="PIRSF003095">
    <property type="entry name" value="Trigger_factor"/>
    <property type="match status" value="1"/>
</dbReference>
<dbReference type="SUPFAM" id="SSF54534">
    <property type="entry name" value="FKBP-like"/>
    <property type="match status" value="1"/>
</dbReference>
<dbReference type="SUPFAM" id="SSF109998">
    <property type="entry name" value="Triger factor/SurA peptide-binding domain-like"/>
    <property type="match status" value="1"/>
</dbReference>
<dbReference type="SUPFAM" id="SSF102735">
    <property type="entry name" value="Trigger factor ribosome-binding domain"/>
    <property type="match status" value="1"/>
</dbReference>
<dbReference type="PROSITE" id="PS50059">
    <property type="entry name" value="FKBP_PPIASE"/>
    <property type="match status" value="1"/>
</dbReference>
<protein>
    <recommendedName>
        <fullName evidence="1">Trigger factor</fullName>
        <shortName evidence="1">TF</shortName>
        <ecNumber evidence="1">5.2.1.8</ecNumber>
    </recommendedName>
    <alternativeName>
        <fullName evidence="1">PPIase</fullName>
    </alternativeName>
</protein>
<gene>
    <name evidence="1" type="primary">tig</name>
    <name type="ordered locus">SUN_0011</name>
</gene>
<proteinExistence type="inferred from homology"/>
<organism>
    <name type="scientific">Sulfurovum sp. (strain NBC37-1)</name>
    <dbReference type="NCBI Taxonomy" id="387093"/>
    <lineage>
        <taxon>Bacteria</taxon>
        <taxon>Pseudomonadati</taxon>
        <taxon>Campylobacterota</taxon>
        <taxon>Epsilonproteobacteria</taxon>
        <taxon>Campylobacterales</taxon>
        <taxon>Sulfurovaceae</taxon>
        <taxon>Sulfurovum</taxon>
    </lineage>
</organism>
<comment type="function">
    <text evidence="1">Involved in protein export. Acts as a chaperone by maintaining the newly synthesized protein in an open conformation. Functions as a peptidyl-prolyl cis-trans isomerase.</text>
</comment>
<comment type="catalytic activity">
    <reaction evidence="1">
        <text>[protein]-peptidylproline (omega=180) = [protein]-peptidylproline (omega=0)</text>
        <dbReference type="Rhea" id="RHEA:16237"/>
        <dbReference type="Rhea" id="RHEA-COMP:10747"/>
        <dbReference type="Rhea" id="RHEA-COMP:10748"/>
        <dbReference type="ChEBI" id="CHEBI:83833"/>
        <dbReference type="ChEBI" id="CHEBI:83834"/>
        <dbReference type="EC" id="5.2.1.8"/>
    </reaction>
</comment>
<comment type="subcellular location">
    <subcellularLocation>
        <location>Cytoplasm</location>
    </subcellularLocation>
    <text evidence="1">About half TF is bound to the ribosome near the polypeptide exit tunnel while the other half is free in the cytoplasm.</text>
</comment>
<comment type="domain">
    <text evidence="1">Consists of 3 domains; the N-terminus binds the ribosome, the middle domain has PPIase activity, while the C-terminus has intrinsic chaperone activity on its own.</text>
</comment>
<comment type="similarity">
    <text evidence="1">Belongs to the FKBP-type PPIase family. Tig subfamily.</text>
</comment>
<reference key="1">
    <citation type="journal article" date="2007" name="Proc. Natl. Acad. Sci. U.S.A.">
        <title>Deep-sea vent epsilon-proteobacterial genomes provide insights into emergence of pathogens.</title>
        <authorList>
            <person name="Nakagawa S."/>
            <person name="Takaki Y."/>
            <person name="Shimamura S."/>
            <person name="Reysenbach A.-L."/>
            <person name="Takai K."/>
            <person name="Horikoshi K."/>
        </authorList>
    </citation>
    <scope>NUCLEOTIDE SEQUENCE [LARGE SCALE GENOMIC DNA]</scope>
    <source>
        <strain>NBC37-1</strain>
    </source>
</reference>
<name>TIG_SULNB</name>
<evidence type="ECO:0000255" key="1">
    <source>
        <dbReference type="HAMAP-Rule" id="MF_00303"/>
    </source>
</evidence>
<feature type="chain" id="PRO_1000022772" description="Trigger factor">
    <location>
        <begin position="1"/>
        <end position="427"/>
    </location>
</feature>
<feature type="domain" description="PPIase FKBP-type" evidence="1">
    <location>
        <begin position="165"/>
        <end position="250"/>
    </location>
</feature>
<accession>A6Q674</accession>
<sequence>MKVEVKKIDDANVAVQGNIENKVVEANVDKLAREAGKQMKVDGFRKGKVPPHVVKKLHGDKLQQDAEGDALRSLIDLGVKEAGINTADILGEPIFKKYDKKDEGIEVEVEISLRPTIEAEGYEKAVPAFEKPEATEKEVEEKLEEIAAQQAPFEKIKRKRMVRDGDTVVIDFEGFVDGVAFEGGKAEKFSLKIGSGQFIPGFEEQIIGMKYDEEKTITVAFPEEYQSKELAGKEAEFKVKLHEIQEQVPAELNDALAQKLLQDEKATLDTLKEKLKEQIVNEKTSKIYNEELKPKIIEALVAHFDFALPNNIVEQEIDAKINAKAREMSEEELNDFKENPEKVEALREELREEAENSVKATFIVDALAKKEDVNVDDQEVSQAIYYEAMMSGQDPQQVIEYYQKNNLLPAVKMGMIEDKLFGKLLGL</sequence>
<keyword id="KW-0131">Cell cycle</keyword>
<keyword id="KW-0132">Cell division</keyword>
<keyword id="KW-0143">Chaperone</keyword>
<keyword id="KW-0963">Cytoplasm</keyword>
<keyword id="KW-0413">Isomerase</keyword>
<keyword id="KW-0697">Rotamase</keyword>